<reference key="1">
    <citation type="journal article" date="2001" name="Science">
        <title>Comparative genomics of Listeria species.</title>
        <authorList>
            <person name="Glaser P."/>
            <person name="Frangeul L."/>
            <person name="Buchrieser C."/>
            <person name="Rusniok C."/>
            <person name="Amend A."/>
            <person name="Baquero F."/>
            <person name="Berche P."/>
            <person name="Bloecker H."/>
            <person name="Brandt P."/>
            <person name="Chakraborty T."/>
            <person name="Charbit A."/>
            <person name="Chetouani F."/>
            <person name="Couve E."/>
            <person name="de Daruvar A."/>
            <person name="Dehoux P."/>
            <person name="Domann E."/>
            <person name="Dominguez-Bernal G."/>
            <person name="Duchaud E."/>
            <person name="Durant L."/>
            <person name="Dussurget O."/>
            <person name="Entian K.-D."/>
            <person name="Fsihi H."/>
            <person name="Garcia-del Portillo F."/>
            <person name="Garrido P."/>
            <person name="Gautier L."/>
            <person name="Goebel W."/>
            <person name="Gomez-Lopez N."/>
            <person name="Hain T."/>
            <person name="Hauf J."/>
            <person name="Jackson D."/>
            <person name="Jones L.-M."/>
            <person name="Kaerst U."/>
            <person name="Kreft J."/>
            <person name="Kuhn M."/>
            <person name="Kunst F."/>
            <person name="Kurapkat G."/>
            <person name="Madueno E."/>
            <person name="Maitournam A."/>
            <person name="Mata Vicente J."/>
            <person name="Ng E."/>
            <person name="Nedjari H."/>
            <person name="Nordsiek G."/>
            <person name="Novella S."/>
            <person name="de Pablos B."/>
            <person name="Perez-Diaz J.-C."/>
            <person name="Purcell R."/>
            <person name="Remmel B."/>
            <person name="Rose M."/>
            <person name="Schlueter T."/>
            <person name="Simoes N."/>
            <person name="Tierrez A."/>
            <person name="Vazquez-Boland J.-A."/>
            <person name="Voss H."/>
            <person name="Wehland J."/>
            <person name="Cossart P."/>
        </authorList>
    </citation>
    <scope>NUCLEOTIDE SEQUENCE [LARGE SCALE GENOMIC DNA]</scope>
    <source>
        <strain>ATCC BAA-679 / EGD-e</strain>
    </source>
</reference>
<protein>
    <recommendedName>
        <fullName evidence="1">Small ribosomal subunit protein uS14A</fullName>
    </recommendedName>
    <alternativeName>
        <fullName evidence="2">30S ribosomal protein S14</fullName>
    </alternativeName>
</protein>
<proteinExistence type="inferred from homology"/>
<name>RS14_LISMO</name>
<organism>
    <name type="scientific">Listeria monocytogenes serovar 1/2a (strain ATCC BAA-679 / EGD-e)</name>
    <dbReference type="NCBI Taxonomy" id="169963"/>
    <lineage>
        <taxon>Bacteria</taxon>
        <taxon>Bacillati</taxon>
        <taxon>Bacillota</taxon>
        <taxon>Bacilli</taxon>
        <taxon>Bacillales</taxon>
        <taxon>Listeriaceae</taxon>
        <taxon>Listeria</taxon>
    </lineage>
</organism>
<feature type="chain" id="PRO_0000130903" description="Small ribosomal subunit protein uS14A">
    <location>
        <begin position="1"/>
        <end position="89"/>
    </location>
</feature>
<accession>Q8Y620</accession>
<keyword id="KW-1185">Reference proteome</keyword>
<keyword id="KW-0687">Ribonucleoprotein</keyword>
<keyword id="KW-0689">Ribosomal protein</keyword>
<keyword id="KW-0694">RNA-binding</keyword>
<keyword id="KW-0699">rRNA-binding</keyword>
<sequence>MAKKSKVAKHERQQALVEQYAELRRTLKAEGRYDELRKLPRDSSPSRLHNRCELTGRPHGYMRKFGMSRIRFRELAHQGQLPGVKKASW</sequence>
<dbReference type="EMBL" id="AL591981">
    <property type="protein sequence ID" value="CAC99960.1"/>
    <property type="molecule type" value="Genomic_DNA"/>
</dbReference>
<dbReference type="PIR" id="AB1310">
    <property type="entry name" value="AB1310"/>
</dbReference>
<dbReference type="RefSeq" id="NP_465406.1">
    <property type="nucleotide sequence ID" value="NC_003210.1"/>
</dbReference>
<dbReference type="RefSeq" id="WP_003724146.1">
    <property type="nucleotide sequence ID" value="NZ_CP149495.1"/>
</dbReference>
<dbReference type="SMR" id="Q8Y620"/>
<dbReference type="STRING" id="169963.gene:17594567"/>
<dbReference type="PaxDb" id="169963-lmo1882"/>
<dbReference type="EnsemblBacteria" id="CAC99960">
    <property type="protein sequence ID" value="CAC99960"/>
    <property type="gene ID" value="CAC99960"/>
</dbReference>
<dbReference type="GeneID" id="985810"/>
<dbReference type="KEGG" id="lmo:lmo1882"/>
<dbReference type="PATRIC" id="fig|169963.11.peg.1927"/>
<dbReference type="eggNOG" id="COG0199">
    <property type="taxonomic scope" value="Bacteria"/>
</dbReference>
<dbReference type="HOGENOM" id="CLU_139869_0_0_9"/>
<dbReference type="OrthoDB" id="9810484at2"/>
<dbReference type="PhylomeDB" id="Q8Y620"/>
<dbReference type="BioCyc" id="LMON169963:LMO1882-MONOMER"/>
<dbReference type="Proteomes" id="UP000000817">
    <property type="component" value="Chromosome"/>
</dbReference>
<dbReference type="GO" id="GO:0005737">
    <property type="term" value="C:cytoplasm"/>
    <property type="evidence" value="ECO:0007669"/>
    <property type="project" value="UniProtKB-ARBA"/>
</dbReference>
<dbReference type="GO" id="GO:0015935">
    <property type="term" value="C:small ribosomal subunit"/>
    <property type="evidence" value="ECO:0000318"/>
    <property type="project" value="GO_Central"/>
</dbReference>
<dbReference type="GO" id="GO:0019843">
    <property type="term" value="F:rRNA binding"/>
    <property type="evidence" value="ECO:0007669"/>
    <property type="project" value="UniProtKB-UniRule"/>
</dbReference>
<dbReference type="GO" id="GO:0003735">
    <property type="term" value="F:structural constituent of ribosome"/>
    <property type="evidence" value="ECO:0000318"/>
    <property type="project" value="GO_Central"/>
</dbReference>
<dbReference type="GO" id="GO:0006412">
    <property type="term" value="P:translation"/>
    <property type="evidence" value="ECO:0000318"/>
    <property type="project" value="GO_Central"/>
</dbReference>
<dbReference type="FunFam" id="4.10.830.10:FF:000003">
    <property type="entry name" value="30S ribosomal protein S14"/>
    <property type="match status" value="1"/>
</dbReference>
<dbReference type="Gene3D" id="4.10.830.10">
    <property type="entry name" value="30s Ribosomal Protein S14, Chain N"/>
    <property type="match status" value="1"/>
</dbReference>
<dbReference type="HAMAP" id="MF_00537">
    <property type="entry name" value="Ribosomal_uS14_1"/>
    <property type="match status" value="1"/>
</dbReference>
<dbReference type="InterPro" id="IPR001209">
    <property type="entry name" value="Ribosomal_uS14"/>
</dbReference>
<dbReference type="InterPro" id="IPR023036">
    <property type="entry name" value="Ribosomal_uS14_bac/plastid"/>
</dbReference>
<dbReference type="InterPro" id="IPR018271">
    <property type="entry name" value="Ribosomal_uS14_CS"/>
</dbReference>
<dbReference type="InterPro" id="IPR043140">
    <property type="entry name" value="Ribosomal_uS14_sf"/>
</dbReference>
<dbReference type="NCBIfam" id="NF006477">
    <property type="entry name" value="PRK08881.1"/>
    <property type="match status" value="1"/>
</dbReference>
<dbReference type="PANTHER" id="PTHR19836">
    <property type="entry name" value="30S RIBOSOMAL PROTEIN S14"/>
    <property type="match status" value="1"/>
</dbReference>
<dbReference type="PANTHER" id="PTHR19836:SF19">
    <property type="entry name" value="SMALL RIBOSOMAL SUBUNIT PROTEIN US14M"/>
    <property type="match status" value="1"/>
</dbReference>
<dbReference type="Pfam" id="PF00253">
    <property type="entry name" value="Ribosomal_S14"/>
    <property type="match status" value="1"/>
</dbReference>
<dbReference type="SUPFAM" id="SSF57716">
    <property type="entry name" value="Glucocorticoid receptor-like (DNA-binding domain)"/>
    <property type="match status" value="1"/>
</dbReference>
<dbReference type="PROSITE" id="PS00527">
    <property type="entry name" value="RIBOSOMAL_S14"/>
    <property type="match status" value="1"/>
</dbReference>
<gene>
    <name evidence="1" type="primary">rpsN</name>
    <name type="synonym">rpsN2</name>
    <name type="ordered locus">lmo1882</name>
</gene>
<comment type="function">
    <text evidence="1">Binds 16S rRNA, required for the assembly of 30S particles and may also be responsible for determining the conformation of the 16S rRNA at the A site.</text>
</comment>
<comment type="subunit">
    <text evidence="1">Part of the 30S ribosomal subunit. Contacts proteins S3 and S10.</text>
</comment>
<comment type="similarity">
    <text evidence="1">Belongs to the universal ribosomal protein uS14 family.</text>
</comment>
<evidence type="ECO:0000255" key="1">
    <source>
        <dbReference type="HAMAP-Rule" id="MF_00537"/>
    </source>
</evidence>
<evidence type="ECO:0000305" key="2"/>